<organism>
    <name type="scientific">Mycobacterium sp. (strain KMS)</name>
    <dbReference type="NCBI Taxonomy" id="189918"/>
    <lineage>
        <taxon>Bacteria</taxon>
        <taxon>Bacillati</taxon>
        <taxon>Actinomycetota</taxon>
        <taxon>Actinomycetes</taxon>
        <taxon>Mycobacteriales</taxon>
        <taxon>Mycobacteriaceae</taxon>
        <taxon>Mycobacterium</taxon>
    </lineage>
</organism>
<accession>A1U8S0</accession>
<reference key="1">
    <citation type="submission" date="2006-12" db="EMBL/GenBank/DDBJ databases">
        <title>Complete sequence of chromosome of Mycobacterium sp. KMS.</title>
        <authorList>
            <consortium name="US DOE Joint Genome Institute"/>
            <person name="Copeland A."/>
            <person name="Lucas S."/>
            <person name="Lapidus A."/>
            <person name="Barry K."/>
            <person name="Detter J.C."/>
            <person name="Glavina del Rio T."/>
            <person name="Hammon N."/>
            <person name="Israni S."/>
            <person name="Dalin E."/>
            <person name="Tice H."/>
            <person name="Pitluck S."/>
            <person name="Kiss H."/>
            <person name="Brettin T."/>
            <person name="Bruce D."/>
            <person name="Han C."/>
            <person name="Tapia R."/>
            <person name="Gilna P."/>
            <person name="Schmutz J."/>
            <person name="Larimer F."/>
            <person name="Land M."/>
            <person name="Hauser L."/>
            <person name="Kyrpides N."/>
            <person name="Mikhailova N."/>
            <person name="Miller C.D."/>
            <person name="Richardson P."/>
        </authorList>
    </citation>
    <scope>NUCLEOTIDE SEQUENCE [LARGE SCALE GENOMIC DNA]</scope>
    <source>
        <strain>KMS</strain>
    </source>
</reference>
<sequence>MTADPDPPFVAVWNTVVAELNGDPAATGPRNGDGALPTLTPQQRAWLKLVKPLVITEGFALLSVPTPFVQNEIERHLREPIITALSRHLGQRVELGVRIATPSPEDDDPPPSPVIADIDEVDEDTEARVSAEETWPRYFSRPPETPAAEDPNAVSLNRRYTFDTFVIGASNRFAHAATLAIAEAPARAYNPLFIWGESGLGKTHLLHAAGNYAQRLFPGMRVKYVSTEEFTNDFINSLRDDRKASFKRSYRDIDVLLVDDIQFIEGKEGIQEEFFHTFNTLHNANKQIVISSDRPPKQLATLEDRLRTRFEWGLITDVQPPELETRIAILRKKAQMDRLDVPDDVLELIASSIERNIRELEGALIRVTAFASLNKTPIDKSLAEIVLRDLISDASTMQISTAAIMAATAEYFETTIEELRGPGKTRALAQSRQIAMYLCRELTDLSLPKIGQAFGRDHTTVMYAEKKIRGEMAERREVFDHVKELTTRIRQRAKR</sequence>
<proteinExistence type="inferred from homology"/>
<keyword id="KW-0067">ATP-binding</keyword>
<keyword id="KW-0963">Cytoplasm</keyword>
<keyword id="KW-0235">DNA replication</keyword>
<keyword id="KW-0238">DNA-binding</keyword>
<keyword id="KW-0446">Lipid-binding</keyword>
<keyword id="KW-0547">Nucleotide-binding</keyword>
<gene>
    <name evidence="1" type="primary">dnaA</name>
    <name type="ordered locus">Mkms_0009</name>
</gene>
<evidence type="ECO:0000255" key="1">
    <source>
        <dbReference type="HAMAP-Rule" id="MF_00377"/>
    </source>
</evidence>
<comment type="function">
    <text evidence="1">Plays an essential role in the initiation and regulation of chromosomal replication. ATP-DnaA binds to the origin of replication (oriC) to initiate formation of the DNA replication initiation complex once per cell cycle. Binds the DnaA box (a 9 base pair repeat at the origin) and separates the double-stranded (ds)DNA. Forms a right-handed helical filament on oriC DNA; dsDNA binds to the exterior of the filament while single-stranded (ss)DNA is stabiized in the filament's interior. The ATP-DnaA-oriC complex binds and stabilizes one strand of the AT-rich DNA unwinding element (DUE), permitting loading of DNA polymerase. After initiation quickly degrades to an ADP-DnaA complex that is not apt for DNA replication. Binds acidic phospholipids.</text>
</comment>
<comment type="subunit">
    <text evidence="1">Oligomerizes as a right-handed, spiral filament on DNA at oriC.</text>
</comment>
<comment type="subcellular location">
    <subcellularLocation>
        <location evidence="1">Cytoplasm</location>
    </subcellularLocation>
</comment>
<comment type="domain">
    <text evidence="1">Domain I is involved in oligomerization and binding regulators, domain II is flexibile and of varying length in different bacteria, domain III forms the AAA+ region, while domain IV binds dsDNA.</text>
</comment>
<comment type="similarity">
    <text evidence="1">Belongs to the DnaA family.</text>
</comment>
<name>DNAA_MYCSK</name>
<feature type="chain" id="PRO_1000048672" description="Chromosomal replication initiator protein DnaA">
    <location>
        <begin position="1"/>
        <end position="495"/>
    </location>
</feature>
<feature type="region of interest" description="Domain I, interacts with DnaA modulators" evidence="1">
    <location>
        <begin position="1"/>
        <end position="91"/>
    </location>
</feature>
<feature type="region of interest" description="Domain II" evidence="1">
    <location>
        <begin position="91"/>
        <end position="154"/>
    </location>
</feature>
<feature type="region of interest" description="Domain III, AAA+ region" evidence="1">
    <location>
        <begin position="155"/>
        <end position="371"/>
    </location>
</feature>
<feature type="region of interest" description="Domain IV, binds dsDNA" evidence="1">
    <location>
        <begin position="372"/>
        <end position="495"/>
    </location>
</feature>
<feature type="binding site" evidence="1">
    <location>
        <position position="199"/>
    </location>
    <ligand>
        <name>ATP</name>
        <dbReference type="ChEBI" id="CHEBI:30616"/>
    </ligand>
</feature>
<feature type="binding site" evidence="1">
    <location>
        <position position="201"/>
    </location>
    <ligand>
        <name>ATP</name>
        <dbReference type="ChEBI" id="CHEBI:30616"/>
    </ligand>
</feature>
<feature type="binding site" evidence="1">
    <location>
        <position position="202"/>
    </location>
    <ligand>
        <name>ATP</name>
        <dbReference type="ChEBI" id="CHEBI:30616"/>
    </ligand>
</feature>
<feature type="binding site" evidence="1">
    <location>
        <position position="203"/>
    </location>
    <ligand>
        <name>ATP</name>
        <dbReference type="ChEBI" id="CHEBI:30616"/>
    </ligand>
</feature>
<dbReference type="EMBL" id="CP000518">
    <property type="protein sequence ID" value="ABL89228.1"/>
    <property type="molecule type" value="Genomic_DNA"/>
</dbReference>
<dbReference type="SMR" id="A1U8S0"/>
<dbReference type="STRING" id="189918.Mkms_0009"/>
<dbReference type="KEGG" id="mkm:Mkms_0009"/>
<dbReference type="HOGENOM" id="CLU_026910_2_0_11"/>
<dbReference type="OrthoDB" id="9807019at2"/>
<dbReference type="GO" id="GO:0005737">
    <property type="term" value="C:cytoplasm"/>
    <property type="evidence" value="ECO:0007669"/>
    <property type="project" value="UniProtKB-SubCell"/>
</dbReference>
<dbReference type="GO" id="GO:0005886">
    <property type="term" value="C:plasma membrane"/>
    <property type="evidence" value="ECO:0007669"/>
    <property type="project" value="TreeGrafter"/>
</dbReference>
<dbReference type="GO" id="GO:0005524">
    <property type="term" value="F:ATP binding"/>
    <property type="evidence" value="ECO:0007669"/>
    <property type="project" value="UniProtKB-UniRule"/>
</dbReference>
<dbReference type="GO" id="GO:0016887">
    <property type="term" value="F:ATP hydrolysis activity"/>
    <property type="evidence" value="ECO:0007669"/>
    <property type="project" value="InterPro"/>
</dbReference>
<dbReference type="GO" id="GO:0003688">
    <property type="term" value="F:DNA replication origin binding"/>
    <property type="evidence" value="ECO:0007669"/>
    <property type="project" value="UniProtKB-UniRule"/>
</dbReference>
<dbReference type="GO" id="GO:0008289">
    <property type="term" value="F:lipid binding"/>
    <property type="evidence" value="ECO:0007669"/>
    <property type="project" value="UniProtKB-KW"/>
</dbReference>
<dbReference type="GO" id="GO:0006270">
    <property type="term" value="P:DNA replication initiation"/>
    <property type="evidence" value="ECO:0007669"/>
    <property type="project" value="UniProtKB-UniRule"/>
</dbReference>
<dbReference type="GO" id="GO:0006275">
    <property type="term" value="P:regulation of DNA replication"/>
    <property type="evidence" value="ECO:0007669"/>
    <property type="project" value="UniProtKB-UniRule"/>
</dbReference>
<dbReference type="CDD" id="cd00009">
    <property type="entry name" value="AAA"/>
    <property type="match status" value="1"/>
</dbReference>
<dbReference type="CDD" id="cd06571">
    <property type="entry name" value="Bac_DnaA_C"/>
    <property type="match status" value="1"/>
</dbReference>
<dbReference type="FunFam" id="1.10.1750.10:FF:000002">
    <property type="entry name" value="Chromosomal replication initiator protein DnaA"/>
    <property type="match status" value="1"/>
</dbReference>
<dbReference type="FunFam" id="1.10.8.60:FF:000003">
    <property type="entry name" value="Chromosomal replication initiator protein DnaA"/>
    <property type="match status" value="1"/>
</dbReference>
<dbReference type="FunFam" id="3.40.50.300:FF:000150">
    <property type="entry name" value="Chromosomal replication initiator protein DnaA"/>
    <property type="match status" value="1"/>
</dbReference>
<dbReference type="Gene3D" id="1.10.1750.10">
    <property type="match status" value="1"/>
</dbReference>
<dbReference type="Gene3D" id="1.10.8.60">
    <property type="match status" value="1"/>
</dbReference>
<dbReference type="Gene3D" id="3.30.300.180">
    <property type="match status" value="1"/>
</dbReference>
<dbReference type="Gene3D" id="3.40.50.300">
    <property type="entry name" value="P-loop containing nucleotide triphosphate hydrolases"/>
    <property type="match status" value="1"/>
</dbReference>
<dbReference type="HAMAP" id="MF_00377">
    <property type="entry name" value="DnaA_bact"/>
    <property type="match status" value="1"/>
</dbReference>
<dbReference type="InterPro" id="IPR003593">
    <property type="entry name" value="AAA+_ATPase"/>
</dbReference>
<dbReference type="InterPro" id="IPR001957">
    <property type="entry name" value="Chromosome_initiator_DnaA"/>
</dbReference>
<dbReference type="InterPro" id="IPR020591">
    <property type="entry name" value="Chromosome_initiator_DnaA-like"/>
</dbReference>
<dbReference type="InterPro" id="IPR018312">
    <property type="entry name" value="Chromosome_initiator_DnaA_CS"/>
</dbReference>
<dbReference type="InterPro" id="IPR013159">
    <property type="entry name" value="DnaA_C"/>
</dbReference>
<dbReference type="InterPro" id="IPR013317">
    <property type="entry name" value="DnaA_dom"/>
</dbReference>
<dbReference type="InterPro" id="IPR038454">
    <property type="entry name" value="DnaA_N_sf"/>
</dbReference>
<dbReference type="InterPro" id="IPR027417">
    <property type="entry name" value="P-loop_NTPase"/>
</dbReference>
<dbReference type="InterPro" id="IPR010921">
    <property type="entry name" value="Trp_repressor/repl_initiator"/>
</dbReference>
<dbReference type="NCBIfam" id="TIGR00362">
    <property type="entry name" value="DnaA"/>
    <property type="match status" value="1"/>
</dbReference>
<dbReference type="NCBIfam" id="NF010686">
    <property type="entry name" value="PRK14086.1"/>
    <property type="match status" value="1"/>
</dbReference>
<dbReference type="PANTHER" id="PTHR30050">
    <property type="entry name" value="CHROMOSOMAL REPLICATION INITIATOR PROTEIN DNAA"/>
    <property type="match status" value="1"/>
</dbReference>
<dbReference type="PANTHER" id="PTHR30050:SF2">
    <property type="entry name" value="CHROMOSOMAL REPLICATION INITIATOR PROTEIN DNAA"/>
    <property type="match status" value="1"/>
</dbReference>
<dbReference type="Pfam" id="PF00308">
    <property type="entry name" value="Bac_DnaA"/>
    <property type="match status" value="1"/>
</dbReference>
<dbReference type="Pfam" id="PF08299">
    <property type="entry name" value="Bac_DnaA_C"/>
    <property type="match status" value="1"/>
</dbReference>
<dbReference type="PRINTS" id="PR00051">
    <property type="entry name" value="DNAA"/>
</dbReference>
<dbReference type="SMART" id="SM00382">
    <property type="entry name" value="AAA"/>
    <property type="match status" value="1"/>
</dbReference>
<dbReference type="SMART" id="SM00760">
    <property type="entry name" value="Bac_DnaA_C"/>
    <property type="match status" value="1"/>
</dbReference>
<dbReference type="SUPFAM" id="SSF52540">
    <property type="entry name" value="P-loop containing nucleoside triphosphate hydrolases"/>
    <property type="match status" value="1"/>
</dbReference>
<dbReference type="SUPFAM" id="SSF48295">
    <property type="entry name" value="TrpR-like"/>
    <property type="match status" value="1"/>
</dbReference>
<dbReference type="PROSITE" id="PS01008">
    <property type="entry name" value="DNAA"/>
    <property type="match status" value="1"/>
</dbReference>
<protein>
    <recommendedName>
        <fullName evidence="1">Chromosomal replication initiator protein DnaA</fullName>
    </recommendedName>
</protein>